<reference key="1">
    <citation type="journal article" date="2004" name="Genome Res.">
        <title>Genome sequence of Haloarcula marismortui: a halophilic archaeon from the Dead Sea.</title>
        <authorList>
            <person name="Baliga N.S."/>
            <person name="Bonneau R."/>
            <person name="Facciotti M.T."/>
            <person name="Pan M."/>
            <person name="Glusman G."/>
            <person name="Deutsch E.W."/>
            <person name="Shannon P."/>
            <person name="Chiu Y."/>
            <person name="Weng R.S."/>
            <person name="Gan R.R."/>
            <person name="Hung P."/>
            <person name="Date S.V."/>
            <person name="Marcotte E."/>
            <person name="Hood L."/>
            <person name="Ng W.V."/>
        </authorList>
    </citation>
    <scope>NUCLEOTIDE SEQUENCE [LARGE SCALE GENOMIC DNA]</scope>
    <source>
        <strain>ATCC 43049 / DSM 3752 / JCM 8966 / VKM B-1809</strain>
    </source>
</reference>
<gene>
    <name evidence="1" type="primary">metXA</name>
    <name type="ordered locus">rrnAC3064</name>
</gene>
<evidence type="ECO:0000255" key="1">
    <source>
        <dbReference type="HAMAP-Rule" id="MF_00296"/>
    </source>
</evidence>
<name>METXA_HALMA</name>
<protein>
    <recommendedName>
        <fullName evidence="1">Homoserine O-acetyltransferase</fullName>
        <shortName evidence="1">HAT</shortName>
        <ecNumber evidence="1">2.3.1.31</ecNumber>
    </recommendedName>
    <alternativeName>
        <fullName evidence="1">Homoserine transacetylase</fullName>
        <shortName evidence="1">HTA</shortName>
    </alternativeName>
</protein>
<sequence>MNVEHNTVSLGEFEFDCGETIPELEITYEAYGEFDGDNAVLVCHALTGSAHVAGRDRVDSADQARAWWDDIVGPGKAIDTTEYYVVCANVPGSCYGSTGPKSENPETGEPYGTDFPPVTVTDWTEAQRALLDELGIPHLHAVVGGSVGGMNVIEWAKRHPDHVDRIVPIAAAARLDTQCLSLDAIARRAITTDPNWKQGHYYGEDDEPPSDGLALARQLGHVMYLSKASMERRFGRRAAGRDAVRTFPTDAAGAFFPYRDVESYLDYNAEKFTERFDANSYLYLTRAMDNYDLAAGFESDADALAAFDGDALVMSFTADWHFTTQQAEALADSLRAADANVAHHVIDSDHGHDAFLVEPDNVGPPLADFLDAGVDGNAVTDSVVEDSQESNFAPVHNSLFSQ</sequence>
<accession>Q5UY71</accession>
<comment type="function">
    <text evidence="1">Transfers an acetyl group from acetyl-CoA to L-homoserine, forming acetyl-L-homoserine.</text>
</comment>
<comment type="catalytic activity">
    <reaction evidence="1">
        <text>L-homoserine + acetyl-CoA = O-acetyl-L-homoserine + CoA</text>
        <dbReference type="Rhea" id="RHEA:13701"/>
        <dbReference type="ChEBI" id="CHEBI:57287"/>
        <dbReference type="ChEBI" id="CHEBI:57288"/>
        <dbReference type="ChEBI" id="CHEBI:57476"/>
        <dbReference type="ChEBI" id="CHEBI:57716"/>
        <dbReference type="EC" id="2.3.1.31"/>
    </reaction>
</comment>
<comment type="pathway">
    <text evidence="1">Amino-acid biosynthesis; L-methionine biosynthesis via de novo pathway; O-acetyl-L-homoserine from L-homoserine: step 1/1.</text>
</comment>
<comment type="subunit">
    <text evidence="1">Homodimer.</text>
</comment>
<comment type="subcellular location">
    <subcellularLocation>
        <location evidence="1">Cytoplasm</location>
    </subcellularLocation>
</comment>
<comment type="similarity">
    <text evidence="1">Belongs to the AB hydrolase superfamily. MetX family.</text>
</comment>
<organism>
    <name type="scientific">Haloarcula marismortui (strain ATCC 43049 / DSM 3752 / JCM 8966 / VKM B-1809)</name>
    <name type="common">Halobacterium marismortui</name>
    <dbReference type="NCBI Taxonomy" id="272569"/>
    <lineage>
        <taxon>Archaea</taxon>
        <taxon>Methanobacteriati</taxon>
        <taxon>Methanobacteriota</taxon>
        <taxon>Stenosarchaea group</taxon>
        <taxon>Halobacteria</taxon>
        <taxon>Halobacteriales</taxon>
        <taxon>Haloarculaceae</taxon>
        <taxon>Haloarcula</taxon>
    </lineage>
</organism>
<dbReference type="EC" id="2.3.1.31" evidence="1"/>
<dbReference type="EMBL" id="AY596297">
    <property type="protein sequence ID" value="AAV47782.1"/>
    <property type="molecule type" value="Genomic_DNA"/>
</dbReference>
<dbReference type="RefSeq" id="WP_011224596.1">
    <property type="nucleotide sequence ID" value="NC_006396.1"/>
</dbReference>
<dbReference type="SMR" id="Q5UY71"/>
<dbReference type="STRING" id="272569.rrnAC3064"/>
<dbReference type="ESTHER" id="halma-metx">
    <property type="family name" value="Homoserine_transacetylase"/>
</dbReference>
<dbReference type="PaxDb" id="272569-rrnAC3064"/>
<dbReference type="EnsemblBacteria" id="AAV47782">
    <property type="protein sequence ID" value="AAV47782"/>
    <property type="gene ID" value="rrnAC3064"/>
</dbReference>
<dbReference type="GeneID" id="40153882"/>
<dbReference type="KEGG" id="hma:rrnAC3064"/>
<dbReference type="PATRIC" id="fig|272569.17.peg.3611"/>
<dbReference type="eggNOG" id="arCOG00627">
    <property type="taxonomic scope" value="Archaea"/>
</dbReference>
<dbReference type="HOGENOM" id="CLU_028760_1_2_2"/>
<dbReference type="UniPathway" id="UPA00051">
    <property type="reaction ID" value="UER00074"/>
</dbReference>
<dbReference type="Proteomes" id="UP000001169">
    <property type="component" value="Chromosome I"/>
</dbReference>
<dbReference type="GO" id="GO:0005737">
    <property type="term" value="C:cytoplasm"/>
    <property type="evidence" value="ECO:0007669"/>
    <property type="project" value="UniProtKB-SubCell"/>
</dbReference>
<dbReference type="GO" id="GO:0004414">
    <property type="term" value="F:homoserine O-acetyltransferase activity"/>
    <property type="evidence" value="ECO:0007669"/>
    <property type="project" value="UniProtKB-UniRule"/>
</dbReference>
<dbReference type="GO" id="GO:0009092">
    <property type="term" value="P:homoserine metabolic process"/>
    <property type="evidence" value="ECO:0007669"/>
    <property type="project" value="TreeGrafter"/>
</dbReference>
<dbReference type="GO" id="GO:0009086">
    <property type="term" value="P:methionine biosynthetic process"/>
    <property type="evidence" value="ECO:0007669"/>
    <property type="project" value="UniProtKB-UniRule"/>
</dbReference>
<dbReference type="Gene3D" id="3.40.50.1820">
    <property type="entry name" value="alpha/beta hydrolase"/>
    <property type="match status" value="1"/>
</dbReference>
<dbReference type="HAMAP" id="MF_00296">
    <property type="entry name" value="MetX_acyltransf"/>
    <property type="match status" value="1"/>
</dbReference>
<dbReference type="InterPro" id="IPR000073">
    <property type="entry name" value="AB_hydrolase_1"/>
</dbReference>
<dbReference type="InterPro" id="IPR029058">
    <property type="entry name" value="AB_hydrolase_fold"/>
</dbReference>
<dbReference type="InterPro" id="IPR008220">
    <property type="entry name" value="HAT_MetX-like"/>
</dbReference>
<dbReference type="NCBIfam" id="TIGR01392">
    <property type="entry name" value="homoserO_Ac_trn"/>
    <property type="match status" value="1"/>
</dbReference>
<dbReference type="NCBIfam" id="NF001209">
    <property type="entry name" value="PRK00175.1"/>
    <property type="match status" value="1"/>
</dbReference>
<dbReference type="PANTHER" id="PTHR32268">
    <property type="entry name" value="HOMOSERINE O-ACETYLTRANSFERASE"/>
    <property type="match status" value="1"/>
</dbReference>
<dbReference type="PANTHER" id="PTHR32268:SF11">
    <property type="entry name" value="HOMOSERINE O-ACETYLTRANSFERASE"/>
    <property type="match status" value="1"/>
</dbReference>
<dbReference type="Pfam" id="PF00561">
    <property type="entry name" value="Abhydrolase_1"/>
    <property type="match status" value="1"/>
</dbReference>
<dbReference type="PIRSF" id="PIRSF000443">
    <property type="entry name" value="Homoser_Ac_trans"/>
    <property type="match status" value="1"/>
</dbReference>
<dbReference type="SUPFAM" id="SSF53474">
    <property type="entry name" value="alpha/beta-Hydrolases"/>
    <property type="match status" value="1"/>
</dbReference>
<feature type="chain" id="PRO_0000155751" description="Homoserine O-acetyltransferase">
    <location>
        <begin position="1"/>
        <end position="402"/>
    </location>
</feature>
<feature type="domain" description="AB hydrolase-1" evidence="1">
    <location>
        <begin position="38"/>
        <end position="359"/>
    </location>
</feature>
<feature type="active site" description="Nucleophile" evidence="1">
    <location>
        <position position="146"/>
    </location>
</feature>
<feature type="active site" evidence="1">
    <location>
        <position position="319"/>
    </location>
</feature>
<feature type="active site" evidence="1">
    <location>
        <position position="352"/>
    </location>
</feature>
<feature type="binding site" evidence="1">
    <location>
        <position position="217"/>
    </location>
    <ligand>
        <name>substrate</name>
    </ligand>
</feature>
<feature type="binding site" evidence="1">
    <location>
        <position position="353"/>
    </location>
    <ligand>
        <name>substrate</name>
    </ligand>
</feature>
<keyword id="KW-0012">Acyltransferase</keyword>
<keyword id="KW-0028">Amino-acid biosynthesis</keyword>
<keyword id="KW-0963">Cytoplasm</keyword>
<keyword id="KW-0486">Methionine biosynthesis</keyword>
<keyword id="KW-1185">Reference proteome</keyword>
<keyword id="KW-0808">Transferase</keyword>
<proteinExistence type="inferred from homology"/>